<proteinExistence type="evidence at transcript level"/>
<dbReference type="EMBL" id="AB015468">
    <property type="protein sequence ID" value="BAB10695.1"/>
    <property type="molecule type" value="Genomic_DNA"/>
</dbReference>
<dbReference type="EMBL" id="CP002688">
    <property type="protein sequence ID" value="AED95698.1"/>
    <property type="molecule type" value="Genomic_DNA"/>
</dbReference>
<dbReference type="EMBL" id="CP002688">
    <property type="protein sequence ID" value="ANM69386.1"/>
    <property type="molecule type" value="Genomic_DNA"/>
</dbReference>
<dbReference type="EMBL" id="CP002688">
    <property type="protein sequence ID" value="ANM69387.1"/>
    <property type="molecule type" value="Genomic_DNA"/>
</dbReference>
<dbReference type="EMBL" id="CP002688">
    <property type="protein sequence ID" value="ANM69388.1"/>
    <property type="molecule type" value="Genomic_DNA"/>
</dbReference>
<dbReference type="EMBL" id="CP002688">
    <property type="protein sequence ID" value="ANM69389.1"/>
    <property type="molecule type" value="Genomic_DNA"/>
</dbReference>
<dbReference type="EMBL" id="CP002688">
    <property type="protein sequence ID" value="ANM69390.1"/>
    <property type="molecule type" value="Genomic_DNA"/>
</dbReference>
<dbReference type="EMBL" id="AK117163">
    <property type="protein sequence ID" value="BAC41841.1"/>
    <property type="molecule type" value="mRNA"/>
</dbReference>
<dbReference type="EMBL" id="BT005968">
    <property type="protein sequence ID" value="AAO64903.1"/>
    <property type="molecule type" value="mRNA"/>
</dbReference>
<dbReference type="RefSeq" id="NP_001331068.1">
    <property type="nucleotide sequence ID" value="NM_001344784.1"/>
</dbReference>
<dbReference type="RefSeq" id="NP_001331069.1">
    <property type="nucleotide sequence ID" value="NM_001344783.1"/>
</dbReference>
<dbReference type="RefSeq" id="NP_001331070.1">
    <property type="nucleotide sequence ID" value="NM_001344785.1"/>
</dbReference>
<dbReference type="RefSeq" id="NP_001331071.1">
    <property type="nucleotide sequence ID" value="NM_001344786.1"/>
</dbReference>
<dbReference type="RefSeq" id="NP_001331072.1">
    <property type="nucleotide sequence ID" value="NM_001344782.1"/>
</dbReference>
<dbReference type="RefSeq" id="NP_199673.1">
    <property type="nucleotide sequence ID" value="NM_124238.4"/>
</dbReference>
<dbReference type="SMR" id="Q9FJK8"/>
<dbReference type="FunCoup" id="Q9FJK8">
    <property type="interactions" value="103"/>
</dbReference>
<dbReference type="STRING" id="3702.Q9FJK8"/>
<dbReference type="iPTMnet" id="Q9FJK8"/>
<dbReference type="PaxDb" id="3702-AT5G48620.1"/>
<dbReference type="ProteomicsDB" id="226921"/>
<dbReference type="EnsemblPlants" id="AT5G48620.1">
    <property type="protein sequence ID" value="AT5G48620.1"/>
    <property type="gene ID" value="AT5G48620"/>
</dbReference>
<dbReference type="EnsemblPlants" id="AT5G48620.2">
    <property type="protein sequence ID" value="AT5G48620.2"/>
    <property type="gene ID" value="AT5G48620"/>
</dbReference>
<dbReference type="EnsemblPlants" id="AT5G48620.3">
    <property type="protein sequence ID" value="AT5G48620.3"/>
    <property type="gene ID" value="AT5G48620"/>
</dbReference>
<dbReference type="EnsemblPlants" id="AT5G48620.4">
    <property type="protein sequence ID" value="AT5G48620.4"/>
    <property type="gene ID" value="AT5G48620"/>
</dbReference>
<dbReference type="EnsemblPlants" id="AT5G48620.5">
    <property type="protein sequence ID" value="AT5G48620.5"/>
    <property type="gene ID" value="AT5G48620"/>
</dbReference>
<dbReference type="EnsemblPlants" id="AT5G48620.6">
    <property type="protein sequence ID" value="AT5G48620.6"/>
    <property type="gene ID" value="AT5G48620"/>
</dbReference>
<dbReference type="GeneID" id="834919"/>
<dbReference type="Gramene" id="AT5G48620.1">
    <property type="protein sequence ID" value="AT5G48620.1"/>
    <property type="gene ID" value="AT5G48620"/>
</dbReference>
<dbReference type="Gramene" id="AT5G48620.2">
    <property type="protein sequence ID" value="AT5G48620.2"/>
    <property type="gene ID" value="AT5G48620"/>
</dbReference>
<dbReference type="Gramene" id="AT5G48620.3">
    <property type="protein sequence ID" value="AT5G48620.3"/>
    <property type="gene ID" value="AT5G48620"/>
</dbReference>
<dbReference type="Gramene" id="AT5G48620.4">
    <property type="protein sequence ID" value="AT5G48620.4"/>
    <property type="gene ID" value="AT5G48620"/>
</dbReference>
<dbReference type="Gramene" id="AT5G48620.5">
    <property type="protein sequence ID" value="AT5G48620.5"/>
    <property type="gene ID" value="AT5G48620"/>
</dbReference>
<dbReference type="Gramene" id="AT5G48620.6">
    <property type="protein sequence ID" value="AT5G48620.6"/>
    <property type="gene ID" value="AT5G48620"/>
</dbReference>
<dbReference type="KEGG" id="ath:AT5G48620"/>
<dbReference type="Araport" id="AT5G48620"/>
<dbReference type="TAIR" id="AT5G48620"/>
<dbReference type="eggNOG" id="KOG4658">
    <property type="taxonomic scope" value="Eukaryota"/>
</dbReference>
<dbReference type="HOGENOM" id="CLU_000837_25_4_1"/>
<dbReference type="InParanoid" id="Q9FJK8"/>
<dbReference type="OMA" id="CWLHDLM"/>
<dbReference type="PhylomeDB" id="Q9FJK8"/>
<dbReference type="PRO" id="PR:Q9FJK8"/>
<dbReference type="Proteomes" id="UP000006548">
    <property type="component" value="Chromosome 5"/>
</dbReference>
<dbReference type="ExpressionAtlas" id="Q9FJK8">
    <property type="expression patterns" value="baseline and differential"/>
</dbReference>
<dbReference type="GO" id="GO:0043531">
    <property type="term" value="F:ADP binding"/>
    <property type="evidence" value="ECO:0007669"/>
    <property type="project" value="InterPro"/>
</dbReference>
<dbReference type="GO" id="GO:0005524">
    <property type="term" value="F:ATP binding"/>
    <property type="evidence" value="ECO:0007669"/>
    <property type="project" value="UniProtKB-KW"/>
</dbReference>
<dbReference type="GO" id="GO:0098542">
    <property type="term" value="P:defense response to other organism"/>
    <property type="evidence" value="ECO:0007669"/>
    <property type="project" value="UniProtKB-ARBA"/>
</dbReference>
<dbReference type="CDD" id="cd14798">
    <property type="entry name" value="RX-CC_like"/>
    <property type="match status" value="1"/>
</dbReference>
<dbReference type="FunFam" id="1.20.5.4130:FF:000002">
    <property type="entry name" value="Disease resistance protein RPP8"/>
    <property type="match status" value="1"/>
</dbReference>
<dbReference type="FunFam" id="3.80.10.10:FF:000940">
    <property type="entry name" value="Disease resistance RPP8-like protein 3"/>
    <property type="match status" value="1"/>
</dbReference>
<dbReference type="FunFam" id="3.40.50.300:FF:001091">
    <property type="entry name" value="Probable disease resistance protein At1g61300"/>
    <property type="match status" value="1"/>
</dbReference>
<dbReference type="FunFam" id="1.10.10.10:FF:000322">
    <property type="entry name" value="Probable disease resistance protein At1g63360"/>
    <property type="match status" value="1"/>
</dbReference>
<dbReference type="FunFam" id="1.10.8.430:FF:000003">
    <property type="entry name" value="Probable disease resistance protein At5g66910"/>
    <property type="match status" value="1"/>
</dbReference>
<dbReference type="Gene3D" id="1.20.5.4130">
    <property type="match status" value="1"/>
</dbReference>
<dbReference type="Gene3D" id="1.10.8.430">
    <property type="entry name" value="Helical domain of apoptotic protease-activating factors"/>
    <property type="match status" value="1"/>
</dbReference>
<dbReference type="Gene3D" id="3.40.50.300">
    <property type="entry name" value="P-loop containing nucleotide triphosphate hydrolases"/>
    <property type="match status" value="1"/>
</dbReference>
<dbReference type="Gene3D" id="3.80.10.10">
    <property type="entry name" value="Ribonuclease Inhibitor"/>
    <property type="match status" value="1"/>
</dbReference>
<dbReference type="Gene3D" id="1.10.10.10">
    <property type="entry name" value="Winged helix-like DNA-binding domain superfamily/Winged helix DNA-binding domain"/>
    <property type="match status" value="1"/>
</dbReference>
<dbReference type="InterPro" id="IPR042197">
    <property type="entry name" value="Apaf_helical"/>
</dbReference>
<dbReference type="InterPro" id="IPR032675">
    <property type="entry name" value="LRR_dom_sf"/>
</dbReference>
<dbReference type="InterPro" id="IPR055414">
    <property type="entry name" value="LRR_R13L4/SHOC2-like"/>
</dbReference>
<dbReference type="InterPro" id="IPR002182">
    <property type="entry name" value="NB-ARC"/>
</dbReference>
<dbReference type="InterPro" id="IPR027417">
    <property type="entry name" value="P-loop_NTPase"/>
</dbReference>
<dbReference type="InterPro" id="IPR038005">
    <property type="entry name" value="RX-like_CC"/>
</dbReference>
<dbReference type="InterPro" id="IPR041118">
    <property type="entry name" value="Rx_N"/>
</dbReference>
<dbReference type="InterPro" id="IPR036388">
    <property type="entry name" value="WH-like_DNA-bd_sf"/>
</dbReference>
<dbReference type="PANTHER" id="PTHR36766:SF40">
    <property type="entry name" value="DISEASE RESISTANCE PROTEIN RGA3"/>
    <property type="match status" value="1"/>
</dbReference>
<dbReference type="PANTHER" id="PTHR36766">
    <property type="entry name" value="PLANT BROAD-SPECTRUM MILDEW RESISTANCE PROTEIN RPW8"/>
    <property type="match status" value="1"/>
</dbReference>
<dbReference type="Pfam" id="PF23598">
    <property type="entry name" value="LRR_14"/>
    <property type="match status" value="1"/>
</dbReference>
<dbReference type="Pfam" id="PF00931">
    <property type="entry name" value="NB-ARC"/>
    <property type="match status" value="1"/>
</dbReference>
<dbReference type="Pfam" id="PF18052">
    <property type="entry name" value="Rx_N"/>
    <property type="match status" value="1"/>
</dbReference>
<dbReference type="Pfam" id="PF23559">
    <property type="entry name" value="WH_DRP"/>
    <property type="match status" value="1"/>
</dbReference>
<dbReference type="PRINTS" id="PR00364">
    <property type="entry name" value="DISEASERSIST"/>
</dbReference>
<dbReference type="SUPFAM" id="SSF52058">
    <property type="entry name" value="L domain-like"/>
    <property type="match status" value="1"/>
</dbReference>
<dbReference type="SUPFAM" id="SSF52540">
    <property type="entry name" value="P-loop containing nucleoside triphosphate hydrolases"/>
    <property type="match status" value="1"/>
</dbReference>
<keyword id="KW-0067">ATP-binding</keyword>
<keyword id="KW-0175">Coiled coil</keyword>
<keyword id="KW-0433">Leucine-rich repeat</keyword>
<keyword id="KW-0547">Nucleotide-binding</keyword>
<keyword id="KW-0611">Plant defense</keyword>
<keyword id="KW-1185">Reference proteome</keyword>
<keyword id="KW-0677">Repeat</keyword>
<accession>Q9FJK8</accession>
<evidence type="ECO:0000250" key="1"/>
<evidence type="ECO:0000255" key="2"/>
<evidence type="ECO:0000305" key="3"/>
<sequence>MAEGFVSFGLEKLWDLLSRESERLQGIDEQLDGLKRQLRSLQSLLKDADAKKHGSDRVRNFLEDVKDLVFDAEDIIESYVLNKLRGEGKGVKKHVRRLARFLTDRHKVASDIEGITKRISDVIGEMQSFGIQQIIDGVRSLSLQERQRVQREIRQTYPDSSESDLVGVEQSVEELVGHLVENDIYQVVSIAGMGGIGKTTLARQVFHHDLVRRHFDGFAWVCVSQQFTLKHVWQRILQELQPHDGNILQMDESALQPKLFQLLETGRYLLVLDDVWKKEDWDRIKAVFPRKRGWKMLLTSRNEGVGIHADPTCLTFRASILNPEESWKLCERIVFPRRDETEVRLDEEMEAMGKEMVTHCGGLPLAVKALGGLLANKHTVPEWKRVSDNIGSQIVGGSCLDDNSLNSVNRILSLSYEDLPTHLKHRFLYLAHFPEDSKIYTQDLFNYWAAEGIYDGSTIQDSGEYYLEELVRRNLVIADNRYLSLEFNFCQMHDMMREVCLSKAKEENFLQIIKDPTSTSTINAQSPSRSRRFSIHSGKAFHILGHRNNPKVRSLIVSRFEEDFWIRSASVFHNLTLLRVLDLSRVKFEGGKLPSSIGGLIHLRYLSLYGAVVSHLPSTMRNLKLLLFLNLRVDNKEPIHVPNVLKEMLELRYLSLPQEMDDKTKLELGDLVNLEYLWYFSTQHSSVTDLLRMTKLRNLGVSLSERCNFETLSSSLRELRNLEMLNVLFSPEIVMVDHMGEFVLDHFIHLKQLGLAVRMSKIPDQHQFPPHLAHIHLVHCVMKEDPMPILEKLLHLKSVALSYGAFIGRRVVCSKGGFPQLCALGISGESELEEWIVEEGSMPCLRTLTIHDCEKLKELPDGLKYITSLKELKIREMKREWKEKLVPGGEDYYKVQHIPDVQFINCDL</sequence>
<feature type="chain" id="PRO_0000212724" description="Probable disease resistance RPP8-like protein 4">
    <location>
        <begin position="1"/>
        <end position="908"/>
    </location>
</feature>
<feature type="domain" description="NB-ARC">
    <location>
        <begin position="146"/>
        <end position="459"/>
    </location>
</feature>
<feature type="repeat" description="LRR 1">
    <location>
        <begin position="575"/>
        <end position="599"/>
    </location>
</feature>
<feature type="repeat" description="LRR 2">
    <location>
        <begin position="600"/>
        <end position="623"/>
    </location>
</feature>
<feature type="repeat" description="LRR 3">
    <location>
        <begin position="842"/>
        <end position="867"/>
    </location>
</feature>
<feature type="coiled-coil region" evidence="2">
    <location>
        <begin position="15"/>
        <end position="57"/>
    </location>
</feature>
<feature type="binding site" evidence="2">
    <location>
        <begin position="192"/>
        <end position="199"/>
    </location>
    <ligand>
        <name>ATP</name>
        <dbReference type="ChEBI" id="CHEBI:30616"/>
    </ligand>
</feature>
<name>RP8L4_ARATH</name>
<reference key="1">
    <citation type="journal article" date="1998" name="DNA Res.">
        <title>Structural analysis of Arabidopsis thaliana chromosome 5. VII. Sequence features of the regions of 1,013,767 bp covered by sixteen physically assigned P1 and TAC clones.</title>
        <authorList>
            <person name="Nakamura Y."/>
            <person name="Sato S."/>
            <person name="Asamizu E."/>
            <person name="Kaneko T."/>
            <person name="Kotani H."/>
            <person name="Miyajima N."/>
            <person name="Tabata S."/>
        </authorList>
    </citation>
    <scope>NUCLEOTIDE SEQUENCE [LARGE SCALE GENOMIC DNA]</scope>
    <source>
        <strain>cv. Columbia</strain>
    </source>
</reference>
<reference key="2">
    <citation type="journal article" date="2017" name="Plant J.">
        <title>Araport11: a complete reannotation of the Arabidopsis thaliana reference genome.</title>
        <authorList>
            <person name="Cheng C.Y."/>
            <person name="Krishnakumar V."/>
            <person name="Chan A.P."/>
            <person name="Thibaud-Nissen F."/>
            <person name="Schobel S."/>
            <person name="Town C.D."/>
        </authorList>
    </citation>
    <scope>GENOME REANNOTATION</scope>
    <source>
        <strain>cv. Columbia</strain>
    </source>
</reference>
<reference key="3">
    <citation type="journal article" date="2002" name="Science">
        <title>Functional annotation of a full-length Arabidopsis cDNA collection.</title>
        <authorList>
            <person name="Seki M."/>
            <person name="Narusaka M."/>
            <person name="Kamiya A."/>
            <person name="Ishida J."/>
            <person name="Satou M."/>
            <person name="Sakurai T."/>
            <person name="Nakajima M."/>
            <person name="Enju A."/>
            <person name="Akiyama K."/>
            <person name="Oono Y."/>
            <person name="Muramatsu M."/>
            <person name="Hayashizaki Y."/>
            <person name="Kawai J."/>
            <person name="Carninci P."/>
            <person name="Itoh M."/>
            <person name="Ishii Y."/>
            <person name="Arakawa T."/>
            <person name="Shibata K."/>
            <person name="Shinagawa A."/>
            <person name="Shinozaki K."/>
        </authorList>
    </citation>
    <scope>NUCLEOTIDE SEQUENCE [LARGE SCALE MRNA]</scope>
    <source>
        <strain>cv. Columbia</strain>
    </source>
</reference>
<reference key="4">
    <citation type="journal article" date="2003" name="Science">
        <title>Empirical analysis of transcriptional activity in the Arabidopsis genome.</title>
        <authorList>
            <person name="Yamada K."/>
            <person name="Lim J."/>
            <person name="Dale J.M."/>
            <person name="Chen H."/>
            <person name="Shinn P."/>
            <person name="Palm C.J."/>
            <person name="Southwick A.M."/>
            <person name="Wu H.C."/>
            <person name="Kim C.J."/>
            <person name="Nguyen M."/>
            <person name="Pham P.K."/>
            <person name="Cheuk R.F."/>
            <person name="Karlin-Newmann G."/>
            <person name="Liu S.X."/>
            <person name="Lam B."/>
            <person name="Sakano H."/>
            <person name="Wu T."/>
            <person name="Yu G."/>
            <person name="Miranda M."/>
            <person name="Quach H.L."/>
            <person name="Tripp M."/>
            <person name="Chang C.H."/>
            <person name="Lee J.M."/>
            <person name="Toriumi M.J."/>
            <person name="Chan M.M."/>
            <person name="Tang C.C."/>
            <person name="Onodera C.S."/>
            <person name="Deng J.M."/>
            <person name="Akiyama K."/>
            <person name="Ansari Y."/>
            <person name="Arakawa T."/>
            <person name="Banh J."/>
            <person name="Banno F."/>
            <person name="Bowser L."/>
            <person name="Brooks S.Y."/>
            <person name="Carninci P."/>
            <person name="Chao Q."/>
            <person name="Choy N."/>
            <person name="Enju A."/>
            <person name="Goldsmith A.D."/>
            <person name="Gurjal M."/>
            <person name="Hansen N.F."/>
            <person name="Hayashizaki Y."/>
            <person name="Johnson-Hopson C."/>
            <person name="Hsuan V.W."/>
            <person name="Iida K."/>
            <person name="Karnes M."/>
            <person name="Khan S."/>
            <person name="Koesema E."/>
            <person name="Ishida J."/>
            <person name="Jiang P.X."/>
            <person name="Jones T."/>
            <person name="Kawai J."/>
            <person name="Kamiya A."/>
            <person name="Meyers C."/>
            <person name="Nakajima M."/>
            <person name="Narusaka M."/>
            <person name="Seki M."/>
            <person name="Sakurai T."/>
            <person name="Satou M."/>
            <person name="Tamse R."/>
            <person name="Vaysberg M."/>
            <person name="Wallender E.K."/>
            <person name="Wong C."/>
            <person name="Yamamura Y."/>
            <person name="Yuan S."/>
            <person name="Shinozaki K."/>
            <person name="Davis R.W."/>
            <person name="Theologis A."/>
            <person name="Ecker J.R."/>
        </authorList>
    </citation>
    <scope>NUCLEOTIDE SEQUENCE [LARGE SCALE MRNA]</scope>
    <source>
        <strain>cv. Columbia</strain>
    </source>
</reference>
<protein>
    <recommendedName>
        <fullName>Probable disease resistance RPP8-like protein 4</fullName>
    </recommendedName>
</protein>
<gene>
    <name type="primary">RPP8L4</name>
    <name type="ordered locus">At5g48620</name>
    <name type="ORF">K15N18.9</name>
</gene>
<organism>
    <name type="scientific">Arabidopsis thaliana</name>
    <name type="common">Mouse-ear cress</name>
    <dbReference type="NCBI Taxonomy" id="3702"/>
    <lineage>
        <taxon>Eukaryota</taxon>
        <taxon>Viridiplantae</taxon>
        <taxon>Streptophyta</taxon>
        <taxon>Embryophyta</taxon>
        <taxon>Tracheophyta</taxon>
        <taxon>Spermatophyta</taxon>
        <taxon>Magnoliopsida</taxon>
        <taxon>eudicotyledons</taxon>
        <taxon>Gunneridae</taxon>
        <taxon>Pentapetalae</taxon>
        <taxon>rosids</taxon>
        <taxon>malvids</taxon>
        <taxon>Brassicales</taxon>
        <taxon>Brassicaceae</taxon>
        <taxon>Camelineae</taxon>
        <taxon>Arabidopsis</taxon>
    </lineage>
</organism>
<comment type="function">
    <text>Potential disease resistance protein.</text>
</comment>
<comment type="domain">
    <text evidence="1">The LRR repeats probably act as specificity determinant of pathogen recognition.</text>
</comment>
<comment type="similarity">
    <text evidence="3">Belongs to the disease resistance NB-LRR family. RPP8/HRT subfamily.</text>
</comment>
<comment type="online information" name="NIB-LRRS">
    <link uri="http://niblrrs.ucdavis.edu"/>
    <text>Functional and comparative genomics of disease resistance gene homologs</text>
</comment>